<gene>
    <name type="primary">STS14</name>
</gene>
<feature type="signal peptide" evidence="1">
    <location>
        <begin position="1"/>
        <end position="19"/>
    </location>
</feature>
<feature type="chain" id="PRO_0000006314" description="STS14 protein">
    <location>
        <begin position="20"/>
        <end position="214"/>
    </location>
</feature>
<feature type="repeat" description="1">
    <location>
        <begin position="13"/>
        <end position="14"/>
    </location>
</feature>
<feature type="repeat" description="2">
    <location>
        <begin position="15"/>
        <end position="16"/>
    </location>
</feature>
<feature type="repeat" description="3">
    <location>
        <begin position="17"/>
        <end position="18"/>
    </location>
</feature>
<feature type="domain" description="SCP">
    <location>
        <begin position="80"/>
        <end position="200"/>
    </location>
</feature>
<feature type="region of interest" description="3 X 2 AA tandem repeats of Y-I">
    <location>
        <begin position="13"/>
        <end position="18"/>
    </location>
</feature>
<keyword id="KW-1185">Reference proteome</keyword>
<keyword id="KW-0677">Repeat</keyword>
<keyword id="KW-0732">Signal</keyword>
<sequence>MFVLSTAMACLVYIYIYIYDEEKKRELKVRNKMTNLLFFQFLLLTTASSLTHISAQTVPPPPPPPTSAATPPSRAAQEFLDAHNKARSEVGVGPLTWSPMLAKETSLLVRYQRDKQNCSFANLSNGKYGGNQLWASGTVVTPRMAVDSWVAEKKFYNYENNSCTGDDKCGVYTQIVWKKSIELGCAQRTCYEGPATLTVCFYNPPGNVIGEKPY</sequence>
<evidence type="ECO:0000255" key="1"/>
<evidence type="ECO:0000305" key="2"/>
<accession>Q41495</accession>
<comment type="function">
    <text>May protect the outer tissues of the pistil from pathogen attack.</text>
</comment>
<comment type="tissue specificity">
    <text>Highly expressed in the stigma and stylar cortex throughout pistil development. Not expressed in other organs.</text>
</comment>
<comment type="developmental stage">
    <text>Accumulates in the pistil around 120 hours before anthesis and increases towards the end of flower development, with a maximum at anthesis.</text>
</comment>
<comment type="similarity">
    <text evidence="2">Belongs to the CRISP family.</text>
</comment>
<organism>
    <name type="scientific">Solanum tuberosum</name>
    <name type="common">Potato</name>
    <dbReference type="NCBI Taxonomy" id="4113"/>
    <lineage>
        <taxon>Eukaryota</taxon>
        <taxon>Viridiplantae</taxon>
        <taxon>Streptophyta</taxon>
        <taxon>Embryophyta</taxon>
        <taxon>Tracheophyta</taxon>
        <taxon>Spermatophyta</taxon>
        <taxon>Magnoliopsida</taxon>
        <taxon>eudicotyledons</taxon>
        <taxon>Gunneridae</taxon>
        <taxon>Pentapetalae</taxon>
        <taxon>asterids</taxon>
        <taxon>lamiids</taxon>
        <taxon>Solanales</taxon>
        <taxon>Solanaceae</taxon>
        <taxon>Solanoideae</taxon>
        <taxon>Solaneae</taxon>
        <taxon>Solanum</taxon>
    </lineage>
</organism>
<name>ST14_SOLTU</name>
<protein>
    <recommendedName>
        <fullName>STS14 protein</fullName>
    </recommendedName>
</protein>
<dbReference type="EMBL" id="X82652">
    <property type="protein sequence ID" value="CAA57976.1"/>
    <property type="molecule type" value="Genomic_DNA"/>
</dbReference>
<dbReference type="PIR" id="S65052">
    <property type="entry name" value="S65052"/>
</dbReference>
<dbReference type="SMR" id="Q41495"/>
<dbReference type="FunCoup" id="Q41495">
    <property type="interactions" value="33"/>
</dbReference>
<dbReference type="PaxDb" id="4113-PGSC0003DMT400056617"/>
<dbReference type="eggNOG" id="KOG3017">
    <property type="taxonomic scope" value="Eukaryota"/>
</dbReference>
<dbReference type="InParanoid" id="Q41495"/>
<dbReference type="Proteomes" id="UP000011115">
    <property type="component" value="Unassembled WGS sequence"/>
</dbReference>
<dbReference type="ExpressionAtlas" id="Q41495">
    <property type="expression patterns" value="baseline and differential"/>
</dbReference>
<dbReference type="GO" id="GO:0005615">
    <property type="term" value="C:extracellular space"/>
    <property type="evidence" value="ECO:0000318"/>
    <property type="project" value="GO_Central"/>
</dbReference>
<dbReference type="GO" id="GO:0019953">
    <property type="term" value="P:sexual reproduction"/>
    <property type="evidence" value="ECO:0000318"/>
    <property type="project" value="GO_Central"/>
</dbReference>
<dbReference type="CDD" id="cd05381">
    <property type="entry name" value="CAP_PR-1"/>
    <property type="match status" value="1"/>
</dbReference>
<dbReference type="FunFam" id="3.40.33.10:FF:000004">
    <property type="entry name" value="CAP, cysteine-rich secretory protein, antigen 5"/>
    <property type="match status" value="1"/>
</dbReference>
<dbReference type="Gene3D" id="3.40.33.10">
    <property type="entry name" value="CAP"/>
    <property type="match status" value="1"/>
</dbReference>
<dbReference type="InterPro" id="IPR014044">
    <property type="entry name" value="CAP_dom"/>
</dbReference>
<dbReference type="InterPro" id="IPR035940">
    <property type="entry name" value="CAP_sf"/>
</dbReference>
<dbReference type="InterPro" id="IPR001283">
    <property type="entry name" value="CRISP-related"/>
</dbReference>
<dbReference type="PANTHER" id="PTHR10334">
    <property type="entry name" value="CYSTEINE-RICH SECRETORY PROTEIN-RELATED"/>
    <property type="match status" value="1"/>
</dbReference>
<dbReference type="Pfam" id="PF00188">
    <property type="entry name" value="CAP"/>
    <property type="match status" value="1"/>
</dbReference>
<dbReference type="PRINTS" id="PR00837">
    <property type="entry name" value="V5TPXLIKE"/>
</dbReference>
<dbReference type="SMART" id="SM00198">
    <property type="entry name" value="SCP"/>
    <property type="match status" value="1"/>
</dbReference>
<dbReference type="SUPFAM" id="SSF55797">
    <property type="entry name" value="PR-1-like"/>
    <property type="match status" value="1"/>
</dbReference>
<reference key="1">
    <citation type="journal article" date="1996" name="Plant Mol. Biol.">
        <title>Molecular analysis of a pistil-specific gene expressed in the stigma and cortex of Solanum tuberosum.</title>
        <authorList>
            <person name="van Eldik G.J."/>
            <person name="Wingens M."/>
            <person name="Ruiter R.K."/>
            <person name="van Herpen M.M.A."/>
            <person name="Schrauwen J.A.M."/>
            <person name="Wullems G.J."/>
        </authorList>
    </citation>
    <scope>NUCLEOTIDE SEQUENCE [GENOMIC DNA]</scope>
    <source>
        <strain>cv. Datura</strain>
        <tissue>Pistil</tissue>
    </source>
</reference>
<proteinExistence type="evidence at transcript level"/>